<comment type="function">
    <text evidence="1 2">Converts acetoacetate to acetoacetyl-CoA in the cytosol (By similarity). Ketone body-utilizing enzyme, responsible for the synthesis of cholesterol and fatty acids (By similarity).</text>
</comment>
<comment type="catalytic activity">
    <reaction evidence="2">
        <text>acetoacetate + ATP + CoA = acetoacetyl-CoA + AMP + diphosphate</text>
        <dbReference type="Rhea" id="RHEA:16117"/>
        <dbReference type="ChEBI" id="CHEBI:13705"/>
        <dbReference type="ChEBI" id="CHEBI:30616"/>
        <dbReference type="ChEBI" id="CHEBI:33019"/>
        <dbReference type="ChEBI" id="CHEBI:57286"/>
        <dbReference type="ChEBI" id="CHEBI:57287"/>
        <dbReference type="ChEBI" id="CHEBI:456215"/>
        <dbReference type="EC" id="6.2.1.16"/>
    </reaction>
    <physiologicalReaction direction="left-to-right" evidence="2">
        <dbReference type="Rhea" id="RHEA:16118"/>
    </physiologicalReaction>
</comment>
<comment type="subcellular location">
    <subcellularLocation>
        <location evidence="2">Cytoplasm</location>
        <location evidence="2">Cytosol</location>
    </subcellularLocation>
</comment>
<comment type="similarity">
    <text evidence="3">Belongs to the ATP-dependent AMP-binding enzyme family.</text>
</comment>
<keyword id="KW-0067">ATP-binding</keyword>
<keyword id="KW-0963">Cytoplasm</keyword>
<keyword id="KW-0276">Fatty acid metabolism</keyword>
<keyword id="KW-0436">Ligase</keyword>
<keyword id="KW-0443">Lipid metabolism</keyword>
<keyword id="KW-0547">Nucleotide-binding</keyword>
<keyword id="KW-1185">Reference proteome</keyword>
<accession>Q5ZLG0</accession>
<gene>
    <name type="primary">AACS</name>
    <name type="ORF">RCJMB04_6g9</name>
</gene>
<dbReference type="EC" id="6.2.1.16" evidence="2"/>
<dbReference type="EMBL" id="AJ719774">
    <property type="protein sequence ID" value="CAG31433.1"/>
    <property type="molecule type" value="mRNA"/>
</dbReference>
<dbReference type="RefSeq" id="NP_001006184.1">
    <property type="nucleotide sequence ID" value="NM_001006184.1"/>
</dbReference>
<dbReference type="SMR" id="Q5ZLG0"/>
<dbReference type="FunCoup" id="Q5ZLG0">
    <property type="interactions" value="79"/>
</dbReference>
<dbReference type="STRING" id="9031.ENSGALP00000004568"/>
<dbReference type="PaxDb" id="9031-ENSGALP00000004568"/>
<dbReference type="GeneID" id="416811"/>
<dbReference type="KEGG" id="gga:416811"/>
<dbReference type="CTD" id="65985"/>
<dbReference type="VEuPathDB" id="HostDB:geneid_416811"/>
<dbReference type="eggNOG" id="KOG1175">
    <property type="taxonomic scope" value="Eukaryota"/>
</dbReference>
<dbReference type="HOGENOM" id="CLU_1418071_0_0_1"/>
<dbReference type="InParanoid" id="Q5ZLG0"/>
<dbReference type="OrthoDB" id="10253869at2759"/>
<dbReference type="PhylomeDB" id="Q5ZLG0"/>
<dbReference type="PRO" id="PR:Q5ZLG0"/>
<dbReference type="Proteomes" id="UP000000539">
    <property type="component" value="Unassembled WGS sequence"/>
</dbReference>
<dbReference type="GO" id="GO:0005829">
    <property type="term" value="C:cytosol"/>
    <property type="evidence" value="ECO:0007669"/>
    <property type="project" value="UniProtKB-SubCell"/>
</dbReference>
<dbReference type="GO" id="GO:0030729">
    <property type="term" value="F:acetoacetate-CoA ligase activity"/>
    <property type="evidence" value="ECO:0000318"/>
    <property type="project" value="GO_Central"/>
</dbReference>
<dbReference type="GO" id="GO:0005524">
    <property type="term" value="F:ATP binding"/>
    <property type="evidence" value="ECO:0007669"/>
    <property type="project" value="UniProtKB-KW"/>
</dbReference>
<dbReference type="GO" id="GO:0006631">
    <property type="term" value="P:fatty acid metabolic process"/>
    <property type="evidence" value="ECO:0007669"/>
    <property type="project" value="UniProtKB-KW"/>
</dbReference>
<dbReference type="GO" id="GO:0032024">
    <property type="term" value="P:positive regulation of insulin secretion"/>
    <property type="evidence" value="ECO:0000318"/>
    <property type="project" value="GO_Central"/>
</dbReference>
<dbReference type="CDD" id="cd05943">
    <property type="entry name" value="AACS"/>
    <property type="match status" value="1"/>
</dbReference>
<dbReference type="FunFam" id="3.30.300.30:FF:000037">
    <property type="entry name" value="acetoacetyl-CoA synthetase"/>
    <property type="match status" value="1"/>
</dbReference>
<dbReference type="Gene3D" id="3.30.300.30">
    <property type="match status" value="1"/>
</dbReference>
<dbReference type="Gene3D" id="3.40.50.12780">
    <property type="entry name" value="N-terminal domain of ligase-like"/>
    <property type="match status" value="1"/>
</dbReference>
<dbReference type="InterPro" id="IPR005914">
    <property type="entry name" value="Acac_CoA_synth"/>
</dbReference>
<dbReference type="InterPro" id="IPR032387">
    <property type="entry name" value="ACAS_N"/>
</dbReference>
<dbReference type="InterPro" id="IPR045851">
    <property type="entry name" value="AMP-bd_C_sf"/>
</dbReference>
<dbReference type="InterPro" id="IPR020845">
    <property type="entry name" value="AMP-binding_CS"/>
</dbReference>
<dbReference type="InterPro" id="IPR000873">
    <property type="entry name" value="AMP-dep_synth/lig_dom"/>
</dbReference>
<dbReference type="InterPro" id="IPR042099">
    <property type="entry name" value="ANL_N_sf"/>
</dbReference>
<dbReference type="NCBIfam" id="TIGR01217">
    <property type="entry name" value="ac_ac_CoA_syn"/>
    <property type="match status" value="1"/>
</dbReference>
<dbReference type="NCBIfam" id="NF002937">
    <property type="entry name" value="PRK03584.1"/>
    <property type="match status" value="1"/>
</dbReference>
<dbReference type="PANTHER" id="PTHR42921">
    <property type="entry name" value="ACETOACETYL-COA SYNTHETASE"/>
    <property type="match status" value="1"/>
</dbReference>
<dbReference type="PANTHER" id="PTHR42921:SF1">
    <property type="entry name" value="ACETOACETYL-COA SYNTHETASE"/>
    <property type="match status" value="1"/>
</dbReference>
<dbReference type="Pfam" id="PF16177">
    <property type="entry name" value="ACAS_N"/>
    <property type="match status" value="1"/>
</dbReference>
<dbReference type="Pfam" id="PF00501">
    <property type="entry name" value="AMP-binding"/>
    <property type="match status" value="1"/>
</dbReference>
<dbReference type="SUPFAM" id="SSF56801">
    <property type="entry name" value="Acetyl-CoA synthetase-like"/>
    <property type="match status" value="1"/>
</dbReference>
<dbReference type="PROSITE" id="PS00455">
    <property type="entry name" value="AMP_BINDING"/>
    <property type="match status" value="1"/>
</dbReference>
<name>AACS_CHICK</name>
<sequence length="667" mass="74370">MSREPEIMESQVMWEPDSKRNTHMDRFRAAVAGSCGLRLANYNDLYQWSVESFADFWAEFWKYSNIVCSRLYDEVVDTSKSIADVPEWFKGSRLNYAENLLKHKDNDKIALYAAKEGKEEILKVTFEELRQAVALYAAAMRKMGVKIGDRVVGYLPNSIHAVEAMLAAASIGAIWSSTSPDFGINGVLDRFSQIQPKLIFSVEAVVYNGKEHNHLEKLLSVVKGLPDLKKVVVIPYVSSRETIDISKIPNSVFLEDFLATGKGDQAPQLEFEQLPFSHPLFIMYSSGTTGAPKCMVHSAGGTLIQHLKEHILHGNMSSNDIIMYYTTTGWMMWNWLVTALATGASVVLYDGSPLVPSPNVLWDLIDRLGITILGTGAKWLAVLEEKNLKPCETHNLQTLHTILSTGSPLKSQSYEYVYKHIKSSVLLGSISGGTDIISCFMGQNVTIPVYKGEIQARNLGMAVEAWNDEGKPVWGESGELVCTKPIPCQPTHFWNDENGSKYRKAYFSKFPGVWAHGDYCKINPKTGGIVMLGRSDGTLNPNGVRFGSSEIYNIVEAFEEVSDSLCVPQYNKDGEERVILFLKMASNHAFSEDLVKRIRDAIRVALSARHVPSLILETKGIPYTINGKKVEVAVKQIIAGKEVEQRGAFSNPETLDLYQNIPELQNF</sequence>
<evidence type="ECO:0000250" key="1">
    <source>
        <dbReference type="UniProtKB" id="Q9D2R0"/>
    </source>
</evidence>
<evidence type="ECO:0000250" key="2">
    <source>
        <dbReference type="UniProtKB" id="Q9JMI1"/>
    </source>
</evidence>
<evidence type="ECO:0000305" key="3"/>
<feature type="chain" id="PRO_0000315788" description="Acetoacetyl-CoA synthetase">
    <location>
        <begin position="1"/>
        <end position="667"/>
    </location>
</feature>
<reference key="1">
    <citation type="journal article" date="2005" name="Genome Biol.">
        <title>Full-length cDNAs from chicken bursal lymphocytes to facilitate gene function analysis.</title>
        <authorList>
            <person name="Caldwell R.B."/>
            <person name="Kierzek A.M."/>
            <person name="Arakawa H."/>
            <person name="Bezzubov Y."/>
            <person name="Zaim J."/>
            <person name="Fiedler P."/>
            <person name="Kutter S."/>
            <person name="Blagodatski A."/>
            <person name="Kostovska D."/>
            <person name="Koter M."/>
            <person name="Plachy J."/>
            <person name="Carninci P."/>
            <person name="Hayashizaki Y."/>
            <person name="Buerstedde J.-M."/>
        </authorList>
    </citation>
    <scope>NUCLEOTIDE SEQUENCE [LARGE SCALE MRNA]</scope>
    <source>
        <strain>CB</strain>
        <tissue>Bursa of Fabricius</tissue>
    </source>
</reference>
<proteinExistence type="evidence at transcript level"/>
<organism>
    <name type="scientific">Gallus gallus</name>
    <name type="common">Chicken</name>
    <dbReference type="NCBI Taxonomy" id="9031"/>
    <lineage>
        <taxon>Eukaryota</taxon>
        <taxon>Metazoa</taxon>
        <taxon>Chordata</taxon>
        <taxon>Craniata</taxon>
        <taxon>Vertebrata</taxon>
        <taxon>Euteleostomi</taxon>
        <taxon>Archelosauria</taxon>
        <taxon>Archosauria</taxon>
        <taxon>Dinosauria</taxon>
        <taxon>Saurischia</taxon>
        <taxon>Theropoda</taxon>
        <taxon>Coelurosauria</taxon>
        <taxon>Aves</taxon>
        <taxon>Neognathae</taxon>
        <taxon>Galloanserae</taxon>
        <taxon>Galliformes</taxon>
        <taxon>Phasianidae</taxon>
        <taxon>Phasianinae</taxon>
        <taxon>Gallus</taxon>
    </lineage>
</organism>
<protein>
    <recommendedName>
        <fullName>Acetoacetyl-CoA synthetase</fullName>
        <ecNumber evidence="2">6.2.1.16</ecNumber>
    </recommendedName>
</protein>